<feature type="chain" id="PRO_0000128404" description="Thermosome subunit alpha">
    <location>
        <begin position="1"/>
        <end position="560"/>
    </location>
</feature>
<feature type="region of interest" description="Disordered" evidence="2">
    <location>
        <begin position="535"/>
        <end position="560"/>
    </location>
</feature>
<feature type="compositionally biased region" description="Basic and acidic residues" evidence="2">
    <location>
        <begin position="535"/>
        <end position="547"/>
    </location>
</feature>
<feature type="sequence conflict" description="In Ref. 1; AAA87624." evidence="5" ref="1">
    <original>M</original>
    <variation>T</variation>
    <location>
        <position position="454"/>
    </location>
</feature>
<protein>
    <recommendedName>
        <fullName>Thermosome subunit alpha</fullName>
        <ecNumber evidence="1">3.6.4.-</ecNumber>
    </recommendedName>
    <alternativeName>
        <fullName>Chaperonin subunit alpha</fullName>
    </alternativeName>
    <alternativeName>
        <fullName>Ring complex subunit alpha</fullName>
    </alternativeName>
    <alternativeName>
        <fullName>Thermophilic factor 55 alpha</fullName>
        <shortName evidence="4">TF55-alpha</shortName>
    </alternativeName>
    <alternativeName>
        <fullName>Thermophilic factor 56</fullName>
    </alternativeName>
    <alternativeName>
        <fullName>Thermosome subunit 1</fullName>
    </alternativeName>
</protein>
<dbReference type="EC" id="3.6.4.-" evidence="1"/>
<dbReference type="EMBL" id="L34691">
    <property type="protein sequence ID" value="AAA87624.1"/>
    <property type="molecule type" value="Genomic_DNA"/>
</dbReference>
<dbReference type="EMBL" id="CP077717">
    <property type="protein sequence ID" value="QXJ29731.1"/>
    <property type="molecule type" value="Genomic_DNA"/>
</dbReference>
<dbReference type="PIR" id="S59859">
    <property type="entry name" value="S59859"/>
</dbReference>
<dbReference type="RefSeq" id="WP_012711357.1">
    <property type="nucleotide sequence ID" value="NZ_CP077717.1"/>
</dbReference>
<dbReference type="SMR" id="P46219"/>
<dbReference type="GeneID" id="84061659"/>
<dbReference type="KEGG" id="sshi:J5U23_02606"/>
<dbReference type="OrthoDB" id="9362at2157"/>
<dbReference type="Proteomes" id="UP000694018">
    <property type="component" value="Chromosome"/>
</dbReference>
<dbReference type="GO" id="GO:0005737">
    <property type="term" value="C:cytoplasm"/>
    <property type="evidence" value="ECO:0007669"/>
    <property type="project" value="UniProtKB-SubCell"/>
</dbReference>
<dbReference type="GO" id="GO:0005524">
    <property type="term" value="F:ATP binding"/>
    <property type="evidence" value="ECO:0007669"/>
    <property type="project" value="UniProtKB-KW"/>
</dbReference>
<dbReference type="GO" id="GO:0016887">
    <property type="term" value="F:ATP hydrolysis activity"/>
    <property type="evidence" value="ECO:0007669"/>
    <property type="project" value="InterPro"/>
</dbReference>
<dbReference type="GO" id="GO:0140662">
    <property type="term" value="F:ATP-dependent protein folding chaperone"/>
    <property type="evidence" value="ECO:0007669"/>
    <property type="project" value="InterPro"/>
</dbReference>
<dbReference type="GO" id="GO:0051082">
    <property type="term" value="F:unfolded protein binding"/>
    <property type="evidence" value="ECO:0007669"/>
    <property type="project" value="InterPro"/>
</dbReference>
<dbReference type="CDD" id="cd03343">
    <property type="entry name" value="cpn60"/>
    <property type="match status" value="1"/>
</dbReference>
<dbReference type="Gene3D" id="3.50.7.10">
    <property type="entry name" value="GroEL"/>
    <property type="match status" value="1"/>
</dbReference>
<dbReference type="Gene3D" id="1.10.560.10">
    <property type="entry name" value="GroEL-like equatorial domain"/>
    <property type="match status" value="1"/>
</dbReference>
<dbReference type="Gene3D" id="3.30.260.10">
    <property type="entry name" value="TCP-1-like chaperonin intermediate domain"/>
    <property type="match status" value="1"/>
</dbReference>
<dbReference type="InterPro" id="IPR017998">
    <property type="entry name" value="Chaperone_TCP-1"/>
</dbReference>
<dbReference type="InterPro" id="IPR002194">
    <property type="entry name" value="Chaperonin_TCP-1_CS"/>
</dbReference>
<dbReference type="InterPro" id="IPR002423">
    <property type="entry name" value="Cpn60/GroEL/TCP-1"/>
</dbReference>
<dbReference type="InterPro" id="IPR027409">
    <property type="entry name" value="GroEL-like_apical_dom_sf"/>
</dbReference>
<dbReference type="InterPro" id="IPR027413">
    <property type="entry name" value="GROEL-like_equatorial_sf"/>
</dbReference>
<dbReference type="InterPro" id="IPR027410">
    <property type="entry name" value="TCP-1-like_intermed_sf"/>
</dbReference>
<dbReference type="InterPro" id="IPR053374">
    <property type="entry name" value="TCP-1_chaperonin"/>
</dbReference>
<dbReference type="InterPro" id="IPR054827">
    <property type="entry name" value="thermosome_alpha"/>
</dbReference>
<dbReference type="InterPro" id="IPR012714">
    <property type="entry name" value="Thermosome_arc"/>
</dbReference>
<dbReference type="NCBIfam" id="NF041082">
    <property type="entry name" value="thermosome_alpha"/>
    <property type="match status" value="1"/>
</dbReference>
<dbReference type="NCBIfam" id="TIGR02339">
    <property type="entry name" value="thermosome_arch"/>
    <property type="match status" value="1"/>
</dbReference>
<dbReference type="NCBIfam" id="NF041083">
    <property type="entry name" value="thermosome_beta"/>
    <property type="match status" value="1"/>
</dbReference>
<dbReference type="PANTHER" id="PTHR11353">
    <property type="entry name" value="CHAPERONIN"/>
    <property type="match status" value="1"/>
</dbReference>
<dbReference type="Pfam" id="PF00118">
    <property type="entry name" value="Cpn60_TCP1"/>
    <property type="match status" value="1"/>
</dbReference>
<dbReference type="PRINTS" id="PR00304">
    <property type="entry name" value="TCOMPLEXTCP1"/>
</dbReference>
<dbReference type="SUPFAM" id="SSF52029">
    <property type="entry name" value="GroEL apical domain-like"/>
    <property type="match status" value="1"/>
</dbReference>
<dbReference type="SUPFAM" id="SSF48592">
    <property type="entry name" value="GroEL equatorial domain-like"/>
    <property type="match status" value="1"/>
</dbReference>
<dbReference type="SUPFAM" id="SSF54849">
    <property type="entry name" value="GroEL-intermediate domain like"/>
    <property type="match status" value="1"/>
</dbReference>
<dbReference type="PROSITE" id="PS00750">
    <property type="entry name" value="TCP1_1"/>
    <property type="match status" value="1"/>
</dbReference>
<dbReference type="PROSITE" id="PS00751">
    <property type="entry name" value="TCP1_2"/>
    <property type="match status" value="1"/>
</dbReference>
<dbReference type="PROSITE" id="PS00995">
    <property type="entry name" value="TCP1_3"/>
    <property type="match status" value="1"/>
</dbReference>
<gene>
    <name type="primary">thsA</name>
    <name type="synonym">tf56</name>
    <name evidence="7" type="ORF">J5U23_02606</name>
</gene>
<sequence length="560" mass="59733">MASPVLLLKEGTSRTTGRDALRNNILAAKTLAEMLRSSLGPKGLDKMLIDSFGDVTITNDGATIVKDMEIQHPAAKLLVEAAKAQDAEVGDGTTSAVVLAGALLEKAESLLDQNIHPTIIIEGYKKAYTKALELLPQLGTRIDIRDLNSSVARDTLRKIAFTTLASKFIAEGAELNKIIDMVIDAIVNVAEPLPNGGYNVSLDLIKIDKKKGGSIEDSVLVKGLVLDKEVVHPGMPRRVTKAKIAVLDAALEVEKPEISAKISITSPEQIKAFLDEESKYLKDMVDKLASIGANVVICQKGIDDIAQHFLAKKGILAVRRVKRSDIEKLEKALGARIISSIKDATPDDLGYAELVEERRVGNDKMVFIEGAKNLKAVNILLRGSNDMALDEAERSINDALHALRNILLEPVILPGGGAIELELAMKLREYARSVGGKEQLAIEAFADALEEIPMILAETAGLEAISALMDLRARHAKGLTNTGVDVIGGKIVDDVYALNIIEPIRVKAQVLKSATEAATAILKIDDLIAAAPLKSEKKGGEGSKEESGGEGGAGTPSLGD</sequence>
<keyword id="KW-0067">ATP-binding</keyword>
<keyword id="KW-0143">Chaperone</keyword>
<keyword id="KW-0963">Cytoplasm</keyword>
<keyword id="KW-0903">Direct protein sequencing</keyword>
<keyword id="KW-0378">Hydrolase</keyword>
<keyword id="KW-0547">Nucleotide-binding</keyword>
<keyword id="KW-0346">Stress response</keyword>
<organism>
    <name type="scientific">Saccharolobus shibatae (strain ATCC 51178 / DSM 5389 / JCM 8931 / NBRC 15437 / B12)</name>
    <name type="common">Sulfolobus shibatae</name>
    <dbReference type="NCBI Taxonomy" id="523848"/>
    <lineage>
        <taxon>Archaea</taxon>
        <taxon>Thermoproteota</taxon>
        <taxon>Thermoprotei</taxon>
        <taxon>Sulfolobales</taxon>
        <taxon>Sulfolobaceae</taxon>
        <taxon>Saccharolobus</taxon>
    </lineage>
</organism>
<evidence type="ECO:0000250" key="1">
    <source>
        <dbReference type="UniProtKB" id="P28488"/>
    </source>
</evidence>
<evidence type="ECO:0000256" key="2">
    <source>
        <dbReference type="SAM" id="MobiDB-lite"/>
    </source>
</evidence>
<evidence type="ECO:0000269" key="3">
    <source>
    </source>
</evidence>
<evidence type="ECO:0000303" key="4">
    <source>
    </source>
</evidence>
<evidence type="ECO:0000305" key="5"/>
<evidence type="ECO:0000305" key="6">
    <source>
    </source>
</evidence>
<evidence type="ECO:0000312" key="7">
    <source>
        <dbReference type="EMBL" id="QXJ29731.1"/>
    </source>
</evidence>
<accession>P46219</accession>
<accession>A0A8F5GUD2</accession>
<name>THSA_SACSH</name>
<reference key="1">
    <citation type="journal article" date="1995" name="J. Mol. Biol.">
        <title>The 60 kDa heat shock proteins in the hyperthermophilic archaeon Sulfolobus shibatae.</title>
        <authorList>
            <person name="Kagawa H.K."/>
            <person name="Osipiuk J."/>
            <person name="Maltsev N."/>
            <person name="Overbeek R."/>
            <person name="Quaite-Randall E."/>
            <person name="Joachimiak A."/>
            <person name="Trent J.D."/>
        </authorList>
    </citation>
    <scope>NUCLEOTIDE SEQUENCE [GENOMIC DNA]</scope>
    <scope>PARTIAL PROTEIN SEQUENCE</scope>
    <scope>INDUCTION BY HEAT SHOCK</scope>
    <source>
        <strain>ATCC 51178 / DSM 5389 / JCM 8931 / NBRC 15437 / B12</strain>
    </source>
</reference>
<reference evidence="7" key="2">
    <citation type="journal article" date="2021" name="Environ. Microbiol.">
        <title>New insights into the diversity and evolution of the archaeal mobilome from three complete genomes of Saccharolobus shibatae.</title>
        <authorList>
            <person name="Medvedeva S."/>
            <person name="Brandt D."/>
            <person name="Cvirkaite-Krupovic V."/>
            <person name="Liu Y."/>
            <person name="Severinov K."/>
            <person name="Ishino S."/>
            <person name="Ishino Y."/>
            <person name="Prangishvili D."/>
            <person name="Kalinowski J."/>
            <person name="Krupovic M."/>
        </authorList>
    </citation>
    <scope>NUCLEOTIDE SEQUENCE [LARGE SCALE GENOMIC DNA]</scope>
    <source>
        <strain>ATCC 51178 / DSM 5389 / JCM 8931 / NBRC 15437 / B12</strain>
    </source>
</reference>
<proteinExistence type="evidence at protein level"/>
<comment type="function">
    <text evidence="3 6">Molecular chaperone; binds unfolded polypeptides in vitro, stimulates protein folding and has ATPase activity (Probable). One of the most abundant proteins in the cell at all temperatures (PubMed:7473746).</text>
</comment>
<comment type="catalytic activity">
    <reaction evidence="1">
        <text>ATP + H2O = ADP + phosphate + H(+)</text>
        <dbReference type="Rhea" id="RHEA:13065"/>
        <dbReference type="ChEBI" id="CHEBI:15377"/>
        <dbReference type="ChEBI" id="CHEBI:15378"/>
        <dbReference type="ChEBI" id="CHEBI:30616"/>
        <dbReference type="ChEBI" id="CHEBI:43474"/>
        <dbReference type="ChEBI" id="CHEBI:456216"/>
    </reaction>
</comment>
<comment type="subunit">
    <text evidence="3 6">Forms a heterooligomeric complex of two stacked nine-membered rings; one of alpha and the other of beta subunits (Probable). Sometimes called a 'rosettasome' (PubMed:7473746).</text>
</comment>
<comment type="subcellular location">
    <subcellularLocation>
        <location evidence="1">Cytoplasm</location>
    </subcellularLocation>
</comment>
<comment type="induction">
    <text evidence="3">Transcription is induced by heat shock (shift from 75 to 86 degrees Celsius). At 80 degrees Celsius and above ThsA and ThsB are the major proteins synthesized (at protein level).</text>
</comment>
<comment type="similarity">
    <text evidence="5">Belongs to the TCP-1 chaperonin family.</text>
</comment>